<evidence type="ECO:0000255" key="1">
    <source>
        <dbReference type="HAMAP-Rule" id="MF_00984"/>
    </source>
</evidence>
<protein>
    <recommendedName>
        <fullName evidence="1">Single-stranded DNA-binding protein 1</fullName>
        <shortName evidence="1">SSB 1</shortName>
    </recommendedName>
</protein>
<comment type="subunit">
    <text evidence="1">Homotetramer.</text>
</comment>
<sequence>MSVNSIHLVGRAGRDPEVKYFESGNVVCNFTLAVNRRTSKKDEPPDWFDLEIWGKTAEIAGNYVKKGSLIGIQGSLKFDHWEDRNSGTPRSKPVIRVNNLDLLGSKRDNAEATMNNYPEEF</sequence>
<reference key="1">
    <citation type="journal article" date="1995" name="DNA Res.">
        <title>Sequence analysis of the genome of the unicellular cyanobacterium Synechocystis sp. strain PCC6803. I. Sequence features in the 1 Mb region from map positions 64% to 92% of the genome.</title>
        <authorList>
            <person name="Kaneko T."/>
            <person name="Tanaka A."/>
            <person name="Sato S."/>
            <person name="Kotani H."/>
            <person name="Sazuka T."/>
            <person name="Miyajima N."/>
            <person name="Sugiura M."/>
            <person name="Tabata S."/>
        </authorList>
    </citation>
    <scope>NUCLEOTIDE SEQUENCE [LARGE SCALE GENOMIC DNA]</scope>
    <source>
        <strain>ATCC 27184 / PCC 6803 / N-1</strain>
    </source>
</reference>
<reference key="2">
    <citation type="journal article" date="1996" name="DNA Res.">
        <title>Sequence analysis of the genome of the unicellular cyanobacterium Synechocystis sp. strain PCC6803. II. Sequence determination of the entire genome and assignment of potential protein-coding regions.</title>
        <authorList>
            <person name="Kaneko T."/>
            <person name="Sato S."/>
            <person name="Kotani H."/>
            <person name="Tanaka A."/>
            <person name="Asamizu E."/>
            <person name="Nakamura Y."/>
            <person name="Miyajima N."/>
            <person name="Hirosawa M."/>
            <person name="Sugiura M."/>
            <person name="Sasamoto S."/>
            <person name="Kimura T."/>
            <person name="Hosouchi T."/>
            <person name="Matsuno A."/>
            <person name="Muraki A."/>
            <person name="Nakazaki N."/>
            <person name="Naruo K."/>
            <person name="Okumura S."/>
            <person name="Shimpo S."/>
            <person name="Takeuchi C."/>
            <person name="Wada T."/>
            <person name="Watanabe A."/>
            <person name="Yamada M."/>
            <person name="Yasuda M."/>
            <person name="Tabata S."/>
        </authorList>
    </citation>
    <scope>NUCLEOTIDE SEQUENCE [LARGE SCALE GENOMIC DNA]</scope>
    <source>
        <strain>ATCC 27184 / PCC 6803 / Kazusa</strain>
    </source>
</reference>
<organism>
    <name type="scientific">Synechocystis sp. (strain ATCC 27184 / PCC 6803 / Kazusa)</name>
    <dbReference type="NCBI Taxonomy" id="1111708"/>
    <lineage>
        <taxon>Bacteria</taxon>
        <taxon>Bacillati</taxon>
        <taxon>Cyanobacteriota</taxon>
        <taxon>Cyanophyceae</taxon>
        <taxon>Synechococcales</taxon>
        <taxon>Merismopediaceae</taxon>
        <taxon>Synechocystis</taxon>
    </lineage>
</organism>
<dbReference type="EMBL" id="BA000022">
    <property type="protein sequence ID" value="BAA10849.1"/>
    <property type="molecule type" value="Genomic_DNA"/>
</dbReference>
<dbReference type="PIR" id="S76002">
    <property type="entry name" value="S76002"/>
</dbReference>
<dbReference type="SMR" id="Q55499"/>
<dbReference type="FunCoup" id="Q55499">
    <property type="interactions" value="439"/>
</dbReference>
<dbReference type="IntAct" id="Q55499">
    <property type="interactions" value="1"/>
</dbReference>
<dbReference type="STRING" id="1148.gene:10500355"/>
<dbReference type="PaxDb" id="1148-1001362"/>
<dbReference type="EnsemblBacteria" id="BAA10849">
    <property type="protein sequence ID" value="BAA10849"/>
    <property type="gene ID" value="BAA10849"/>
</dbReference>
<dbReference type="KEGG" id="syn:slr0925"/>
<dbReference type="eggNOG" id="COG0629">
    <property type="taxonomic scope" value="Bacteria"/>
</dbReference>
<dbReference type="InParanoid" id="Q55499"/>
<dbReference type="PhylomeDB" id="Q55499"/>
<dbReference type="Proteomes" id="UP000001425">
    <property type="component" value="Chromosome"/>
</dbReference>
<dbReference type="GO" id="GO:0009295">
    <property type="term" value="C:nucleoid"/>
    <property type="evidence" value="ECO:0000318"/>
    <property type="project" value="GO_Central"/>
</dbReference>
<dbReference type="GO" id="GO:0008047">
    <property type="term" value="F:enzyme activator activity"/>
    <property type="evidence" value="ECO:0000318"/>
    <property type="project" value="GO_Central"/>
</dbReference>
<dbReference type="GO" id="GO:0003697">
    <property type="term" value="F:single-stranded DNA binding"/>
    <property type="evidence" value="ECO:0000318"/>
    <property type="project" value="GO_Central"/>
</dbReference>
<dbReference type="GO" id="GO:0006260">
    <property type="term" value="P:DNA replication"/>
    <property type="evidence" value="ECO:0000318"/>
    <property type="project" value="GO_Central"/>
</dbReference>
<dbReference type="CDD" id="cd04496">
    <property type="entry name" value="SSB_OBF"/>
    <property type="match status" value="1"/>
</dbReference>
<dbReference type="FunFam" id="2.40.50.140:FF:000590">
    <property type="entry name" value="Single-stranded DNA-binding protein"/>
    <property type="match status" value="1"/>
</dbReference>
<dbReference type="Gene3D" id="2.40.50.140">
    <property type="entry name" value="Nucleic acid-binding proteins"/>
    <property type="match status" value="1"/>
</dbReference>
<dbReference type="HAMAP" id="MF_00984">
    <property type="entry name" value="SSB"/>
    <property type="match status" value="1"/>
</dbReference>
<dbReference type="InterPro" id="IPR012340">
    <property type="entry name" value="NA-bd_OB-fold"/>
</dbReference>
<dbReference type="InterPro" id="IPR000424">
    <property type="entry name" value="Primosome_PriB/ssb"/>
</dbReference>
<dbReference type="InterPro" id="IPR011344">
    <property type="entry name" value="ssDNA-bd"/>
</dbReference>
<dbReference type="NCBIfam" id="NF005674">
    <property type="entry name" value="PRK07459.1"/>
    <property type="match status" value="1"/>
</dbReference>
<dbReference type="NCBIfam" id="TIGR00621">
    <property type="entry name" value="ssb"/>
    <property type="match status" value="1"/>
</dbReference>
<dbReference type="PANTHER" id="PTHR10302">
    <property type="entry name" value="SINGLE-STRANDED DNA-BINDING PROTEIN"/>
    <property type="match status" value="1"/>
</dbReference>
<dbReference type="PANTHER" id="PTHR10302:SF0">
    <property type="entry name" value="SINGLE-STRANDED DNA-BINDING PROTEIN, MITOCHONDRIAL"/>
    <property type="match status" value="1"/>
</dbReference>
<dbReference type="Pfam" id="PF00436">
    <property type="entry name" value="SSB"/>
    <property type="match status" value="1"/>
</dbReference>
<dbReference type="PIRSF" id="PIRSF002070">
    <property type="entry name" value="SSB"/>
    <property type="match status" value="1"/>
</dbReference>
<dbReference type="SUPFAM" id="SSF50249">
    <property type="entry name" value="Nucleic acid-binding proteins"/>
    <property type="match status" value="1"/>
</dbReference>
<dbReference type="PROSITE" id="PS50935">
    <property type="entry name" value="SSB"/>
    <property type="match status" value="1"/>
</dbReference>
<accession>Q55499</accession>
<keyword id="KW-0238">DNA-binding</keyword>
<keyword id="KW-1185">Reference proteome</keyword>
<name>SSB1_SYNY3</name>
<proteinExistence type="inferred from homology"/>
<feature type="chain" id="PRO_0000096127" description="Single-stranded DNA-binding protein 1">
    <location>
        <begin position="1"/>
        <end position="121"/>
    </location>
</feature>
<feature type="domain" description="SSB" evidence="1">
    <location>
        <begin position="3"/>
        <end position="104"/>
    </location>
</feature>
<gene>
    <name type="primary">ssb</name>
    <name type="ordered locus">slr0925</name>
</gene>